<gene>
    <name evidence="1" type="primary">rpmE</name>
    <name type="ordered locus">lpl0686</name>
</gene>
<name>RL31_LEGPL</name>
<keyword id="KW-0479">Metal-binding</keyword>
<keyword id="KW-0687">Ribonucleoprotein</keyword>
<keyword id="KW-0689">Ribosomal protein</keyword>
<keyword id="KW-0694">RNA-binding</keyword>
<keyword id="KW-0699">rRNA-binding</keyword>
<keyword id="KW-0862">Zinc</keyword>
<dbReference type="EMBL" id="CR628337">
    <property type="protein sequence ID" value="CAH14920.1"/>
    <property type="molecule type" value="Genomic_DNA"/>
</dbReference>
<dbReference type="RefSeq" id="WP_010946387.1">
    <property type="nucleotide sequence ID" value="NC_006369.1"/>
</dbReference>
<dbReference type="SMR" id="Q5WYQ0"/>
<dbReference type="GeneID" id="57034644"/>
<dbReference type="KEGG" id="lpf:lpl0686"/>
<dbReference type="LegioList" id="lpl0686"/>
<dbReference type="HOGENOM" id="CLU_114306_4_2_6"/>
<dbReference type="Proteomes" id="UP000002517">
    <property type="component" value="Chromosome"/>
</dbReference>
<dbReference type="GO" id="GO:1990904">
    <property type="term" value="C:ribonucleoprotein complex"/>
    <property type="evidence" value="ECO:0007669"/>
    <property type="project" value="UniProtKB-KW"/>
</dbReference>
<dbReference type="GO" id="GO:0005840">
    <property type="term" value="C:ribosome"/>
    <property type="evidence" value="ECO:0007669"/>
    <property type="project" value="UniProtKB-KW"/>
</dbReference>
<dbReference type="GO" id="GO:0046872">
    <property type="term" value="F:metal ion binding"/>
    <property type="evidence" value="ECO:0007669"/>
    <property type="project" value="UniProtKB-KW"/>
</dbReference>
<dbReference type="GO" id="GO:0019843">
    <property type="term" value="F:rRNA binding"/>
    <property type="evidence" value="ECO:0007669"/>
    <property type="project" value="UniProtKB-KW"/>
</dbReference>
<dbReference type="GO" id="GO:0003735">
    <property type="term" value="F:structural constituent of ribosome"/>
    <property type="evidence" value="ECO:0007669"/>
    <property type="project" value="InterPro"/>
</dbReference>
<dbReference type="GO" id="GO:0006412">
    <property type="term" value="P:translation"/>
    <property type="evidence" value="ECO:0007669"/>
    <property type="project" value="UniProtKB-UniRule"/>
</dbReference>
<dbReference type="Gene3D" id="4.10.830.30">
    <property type="entry name" value="Ribosomal protein L31"/>
    <property type="match status" value="1"/>
</dbReference>
<dbReference type="HAMAP" id="MF_00501">
    <property type="entry name" value="Ribosomal_bL31_1"/>
    <property type="match status" value="1"/>
</dbReference>
<dbReference type="InterPro" id="IPR034704">
    <property type="entry name" value="Ribosomal_bL28/bL31-like_sf"/>
</dbReference>
<dbReference type="InterPro" id="IPR002150">
    <property type="entry name" value="Ribosomal_bL31"/>
</dbReference>
<dbReference type="InterPro" id="IPR027491">
    <property type="entry name" value="Ribosomal_bL31_A"/>
</dbReference>
<dbReference type="InterPro" id="IPR042105">
    <property type="entry name" value="Ribosomal_bL31_sf"/>
</dbReference>
<dbReference type="NCBIfam" id="TIGR00105">
    <property type="entry name" value="L31"/>
    <property type="match status" value="1"/>
</dbReference>
<dbReference type="NCBIfam" id="NF000612">
    <property type="entry name" value="PRK00019.1"/>
    <property type="match status" value="1"/>
</dbReference>
<dbReference type="NCBIfam" id="NF001809">
    <property type="entry name" value="PRK00528.1"/>
    <property type="match status" value="1"/>
</dbReference>
<dbReference type="PANTHER" id="PTHR33280">
    <property type="entry name" value="50S RIBOSOMAL PROTEIN L31, CHLOROPLASTIC"/>
    <property type="match status" value="1"/>
</dbReference>
<dbReference type="PANTHER" id="PTHR33280:SF6">
    <property type="entry name" value="LARGE RIBOSOMAL SUBUNIT PROTEIN BL31A"/>
    <property type="match status" value="1"/>
</dbReference>
<dbReference type="Pfam" id="PF01197">
    <property type="entry name" value="Ribosomal_L31"/>
    <property type="match status" value="1"/>
</dbReference>
<dbReference type="PRINTS" id="PR01249">
    <property type="entry name" value="RIBOSOMALL31"/>
</dbReference>
<dbReference type="SUPFAM" id="SSF143800">
    <property type="entry name" value="L28p-like"/>
    <property type="match status" value="1"/>
</dbReference>
<dbReference type="PROSITE" id="PS01143">
    <property type="entry name" value="RIBOSOMAL_L31"/>
    <property type="match status" value="1"/>
</dbReference>
<organism>
    <name type="scientific">Legionella pneumophila (strain Lens)</name>
    <dbReference type="NCBI Taxonomy" id="297245"/>
    <lineage>
        <taxon>Bacteria</taxon>
        <taxon>Pseudomonadati</taxon>
        <taxon>Pseudomonadota</taxon>
        <taxon>Gammaproteobacteria</taxon>
        <taxon>Legionellales</taxon>
        <taxon>Legionellaceae</taxon>
        <taxon>Legionella</taxon>
    </lineage>
</organism>
<accession>Q5WYQ0</accession>
<evidence type="ECO:0000255" key="1">
    <source>
        <dbReference type="HAMAP-Rule" id="MF_00501"/>
    </source>
</evidence>
<evidence type="ECO:0000305" key="2"/>
<comment type="function">
    <text evidence="1">Binds the 23S rRNA.</text>
</comment>
<comment type="cofactor">
    <cofactor evidence="1">
        <name>Zn(2+)</name>
        <dbReference type="ChEBI" id="CHEBI:29105"/>
    </cofactor>
    <text evidence="1">Binds 1 zinc ion per subunit.</text>
</comment>
<comment type="subunit">
    <text evidence="1">Part of the 50S ribosomal subunit.</text>
</comment>
<comment type="similarity">
    <text evidence="1">Belongs to the bacterial ribosomal protein bL31 family. Type A subfamily.</text>
</comment>
<protein>
    <recommendedName>
        <fullName evidence="1">Large ribosomal subunit protein bL31</fullName>
    </recommendedName>
    <alternativeName>
        <fullName evidence="2">50S ribosomal protein L31</fullName>
    </alternativeName>
</protein>
<sequence length="75" mass="8568">MKASVHPDYQTVKVTCSCGEVFETRSTLCKDLNIEVCSMCHPFYTGKQKLVDTGGRVQKFRDRYNMRTGQAKSKE</sequence>
<reference key="1">
    <citation type="journal article" date="2004" name="Nat. Genet.">
        <title>Evidence in the Legionella pneumophila genome for exploitation of host cell functions and high genome plasticity.</title>
        <authorList>
            <person name="Cazalet C."/>
            <person name="Rusniok C."/>
            <person name="Brueggemann H."/>
            <person name="Zidane N."/>
            <person name="Magnier A."/>
            <person name="Ma L."/>
            <person name="Tichit M."/>
            <person name="Jarraud S."/>
            <person name="Bouchier C."/>
            <person name="Vandenesch F."/>
            <person name="Kunst F."/>
            <person name="Etienne J."/>
            <person name="Glaser P."/>
            <person name="Buchrieser C."/>
        </authorList>
    </citation>
    <scope>NUCLEOTIDE SEQUENCE [LARGE SCALE GENOMIC DNA]</scope>
    <source>
        <strain>Lens</strain>
    </source>
</reference>
<proteinExistence type="inferred from homology"/>
<feature type="chain" id="PRO_0000173120" description="Large ribosomal subunit protein bL31">
    <location>
        <begin position="1"/>
        <end position="75"/>
    </location>
</feature>
<feature type="binding site" evidence="1">
    <location>
        <position position="16"/>
    </location>
    <ligand>
        <name>Zn(2+)</name>
        <dbReference type="ChEBI" id="CHEBI:29105"/>
    </ligand>
</feature>
<feature type="binding site" evidence="1">
    <location>
        <position position="18"/>
    </location>
    <ligand>
        <name>Zn(2+)</name>
        <dbReference type="ChEBI" id="CHEBI:29105"/>
    </ligand>
</feature>
<feature type="binding site" evidence="1">
    <location>
        <position position="37"/>
    </location>
    <ligand>
        <name>Zn(2+)</name>
        <dbReference type="ChEBI" id="CHEBI:29105"/>
    </ligand>
</feature>
<feature type="binding site" evidence="1">
    <location>
        <position position="40"/>
    </location>
    <ligand>
        <name>Zn(2+)</name>
        <dbReference type="ChEBI" id="CHEBI:29105"/>
    </ligand>
</feature>